<name>LACB_STAHJ</name>
<protein>
    <recommendedName>
        <fullName evidence="1">Galactose-6-phosphate isomerase subunit LacB</fullName>
        <ecNumber evidence="1">5.3.1.26</ecNumber>
    </recommendedName>
</protein>
<reference key="1">
    <citation type="journal article" date="2005" name="J. Bacteriol.">
        <title>Whole-genome sequencing of Staphylococcus haemolyticus uncovers the extreme plasticity of its genome and the evolution of human-colonizing staphylococcal species.</title>
        <authorList>
            <person name="Takeuchi F."/>
            <person name="Watanabe S."/>
            <person name="Baba T."/>
            <person name="Yuzawa H."/>
            <person name="Ito T."/>
            <person name="Morimoto Y."/>
            <person name="Kuroda M."/>
            <person name="Cui L."/>
            <person name="Takahashi M."/>
            <person name="Ankai A."/>
            <person name="Baba S."/>
            <person name="Fukui S."/>
            <person name="Lee J.C."/>
            <person name="Hiramatsu K."/>
        </authorList>
    </citation>
    <scope>NUCLEOTIDE SEQUENCE [LARGE SCALE GENOMIC DNA]</scope>
    <source>
        <strain>JCSC1435</strain>
    </source>
</reference>
<organism>
    <name type="scientific">Staphylococcus haemolyticus (strain JCSC1435)</name>
    <dbReference type="NCBI Taxonomy" id="279808"/>
    <lineage>
        <taxon>Bacteria</taxon>
        <taxon>Bacillati</taxon>
        <taxon>Bacillota</taxon>
        <taxon>Bacilli</taxon>
        <taxon>Bacillales</taxon>
        <taxon>Staphylococcaceae</taxon>
        <taxon>Staphylococcus</taxon>
    </lineage>
</organism>
<comment type="catalytic activity">
    <reaction evidence="1">
        <text>aldehydo-D-galactose 6-phosphate = keto-D-tagatose 6-phosphate</text>
        <dbReference type="Rhea" id="RHEA:13033"/>
        <dbReference type="ChEBI" id="CHEBI:58255"/>
        <dbReference type="ChEBI" id="CHEBI:134283"/>
        <dbReference type="EC" id="5.3.1.26"/>
    </reaction>
</comment>
<comment type="pathway">
    <text evidence="1">Carbohydrate metabolism; D-galactose 6-phosphate degradation; D-tagatose 6-phosphate from D-galactose 6-phosphate: step 1/1.</text>
</comment>
<comment type="subunit">
    <text evidence="1">Heteromultimeric protein consisting of LacA and LacB.</text>
</comment>
<comment type="similarity">
    <text evidence="1">Belongs to the LacAB/RpiB family.</text>
</comment>
<gene>
    <name evidence="1" type="primary">lacB</name>
    <name type="ordered locus">SH0843</name>
</gene>
<sequence>MKIAIGCDHIVTDTKMEVSQHLKAQGHEVIDVGTYDFTRTHYPIFGKKVGEKVASGEADLGVCICGTGVGISNAANKVPGVRTALVRDMTSALYSKEELNANVVSFGGKVAGELFIFDIVDAFIKAEYKPTEENKKLIAKINHLEAHNDNQANPHFFDEFLEKWDKGKYHD</sequence>
<evidence type="ECO:0000255" key="1">
    <source>
        <dbReference type="HAMAP-Rule" id="MF_01556"/>
    </source>
</evidence>
<proteinExistence type="inferred from homology"/>
<feature type="chain" id="PRO_0000208145" description="Galactose-6-phosphate isomerase subunit LacB">
    <location>
        <begin position="1"/>
        <end position="171"/>
    </location>
</feature>
<accession>Q4L873</accession>
<dbReference type="EC" id="5.3.1.26" evidence="1"/>
<dbReference type="EMBL" id="AP006716">
    <property type="protein sequence ID" value="BAE04152.1"/>
    <property type="molecule type" value="Genomic_DNA"/>
</dbReference>
<dbReference type="RefSeq" id="WP_011275156.1">
    <property type="nucleotide sequence ID" value="NC_007168.1"/>
</dbReference>
<dbReference type="SMR" id="Q4L873"/>
<dbReference type="KEGG" id="sha:SH0843"/>
<dbReference type="eggNOG" id="COG0698">
    <property type="taxonomic scope" value="Bacteria"/>
</dbReference>
<dbReference type="HOGENOM" id="CLU_091396_2_0_9"/>
<dbReference type="OrthoDB" id="1778624at2"/>
<dbReference type="UniPathway" id="UPA00702">
    <property type="reaction ID" value="UER00714"/>
</dbReference>
<dbReference type="Proteomes" id="UP000000543">
    <property type="component" value="Chromosome"/>
</dbReference>
<dbReference type="GO" id="GO:0050044">
    <property type="term" value="F:galactose-6-phosphate isomerase activity"/>
    <property type="evidence" value="ECO:0007669"/>
    <property type="project" value="UniProtKB-UniRule"/>
</dbReference>
<dbReference type="GO" id="GO:0004751">
    <property type="term" value="F:ribose-5-phosphate isomerase activity"/>
    <property type="evidence" value="ECO:0007669"/>
    <property type="project" value="TreeGrafter"/>
</dbReference>
<dbReference type="GO" id="GO:0019316">
    <property type="term" value="P:D-allose catabolic process"/>
    <property type="evidence" value="ECO:0007669"/>
    <property type="project" value="TreeGrafter"/>
</dbReference>
<dbReference type="GO" id="GO:0019388">
    <property type="term" value="P:galactose catabolic process"/>
    <property type="evidence" value="ECO:0007669"/>
    <property type="project" value="UniProtKB-UniPathway"/>
</dbReference>
<dbReference type="GO" id="GO:0019512">
    <property type="term" value="P:lactose catabolic process via tagatose-6-phosphate"/>
    <property type="evidence" value="ECO:0007669"/>
    <property type="project" value="UniProtKB-UniRule"/>
</dbReference>
<dbReference type="GO" id="GO:0009052">
    <property type="term" value="P:pentose-phosphate shunt, non-oxidative branch"/>
    <property type="evidence" value="ECO:0007669"/>
    <property type="project" value="TreeGrafter"/>
</dbReference>
<dbReference type="Gene3D" id="3.40.1400.10">
    <property type="entry name" value="Sugar-phosphate isomerase, RpiB/LacA/LacB"/>
    <property type="match status" value="1"/>
</dbReference>
<dbReference type="HAMAP" id="MF_01556">
    <property type="entry name" value="LacB"/>
    <property type="match status" value="1"/>
</dbReference>
<dbReference type="InterPro" id="IPR004784">
    <property type="entry name" value="LacB"/>
</dbReference>
<dbReference type="InterPro" id="IPR003500">
    <property type="entry name" value="RpiB_LacA_LacB"/>
</dbReference>
<dbReference type="InterPro" id="IPR036569">
    <property type="entry name" value="RpiB_LacA_LacB_sf"/>
</dbReference>
<dbReference type="NCBIfam" id="TIGR01119">
    <property type="entry name" value="lacB"/>
    <property type="match status" value="1"/>
</dbReference>
<dbReference type="NCBIfam" id="NF004051">
    <property type="entry name" value="PRK05571.1"/>
    <property type="match status" value="1"/>
</dbReference>
<dbReference type="NCBIfam" id="NF006381">
    <property type="entry name" value="PRK08622.1"/>
    <property type="match status" value="1"/>
</dbReference>
<dbReference type="NCBIfam" id="TIGR00689">
    <property type="entry name" value="rpiB_lacA_lacB"/>
    <property type="match status" value="1"/>
</dbReference>
<dbReference type="PANTHER" id="PTHR30345:SF0">
    <property type="entry name" value="DNA DAMAGE-REPAIR_TOLERATION PROTEIN DRT102"/>
    <property type="match status" value="1"/>
</dbReference>
<dbReference type="PANTHER" id="PTHR30345">
    <property type="entry name" value="RIBOSE-5-PHOSPHATE ISOMERASE B"/>
    <property type="match status" value="1"/>
</dbReference>
<dbReference type="Pfam" id="PF02502">
    <property type="entry name" value="LacAB_rpiB"/>
    <property type="match status" value="1"/>
</dbReference>
<dbReference type="PIRSF" id="PIRSF005384">
    <property type="entry name" value="RpiB_LacA_B"/>
    <property type="match status" value="1"/>
</dbReference>
<dbReference type="SUPFAM" id="SSF89623">
    <property type="entry name" value="Ribose/Galactose isomerase RpiB/AlsB"/>
    <property type="match status" value="1"/>
</dbReference>
<keyword id="KW-0413">Isomerase</keyword>
<keyword id="KW-0423">Lactose metabolism</keyword>